<comment type="catalytic activity">
    <reaction evidence="1">
        <text>tRNA(Arg) + L-arginine + ATP = L-arginyl-tRNA(Arg) + AMP + diphosphate</text>
        <dbReference type="Rhea" id="RHEA:20301"/>
        <dbReference type="Rhea" id="RHEA-COMP:9658"/>
        <dbReference type="Rhea" id="RHEA-COMP:9673"/>
        <dbReference type="ChEBI" id="CHEBI:30616"/>
        <dbReference type="ChEBI" id="CHEBI:32682"/>
        <dbReference type="ChEBI" id="CHEBI:33019"/>
        <dbReference type="ChEBI" id="CHEBI:78442"/>
        <dbReference type="ChEBI" id="CHEBI:78513"/>
        <dbReference type="ChEBI" id="CHEBI:456215"/>
        <dbReference type="EC" id="6.1.1.19"/>
    </reaction>
</comment>
<comment type="subcellular location">
    <subcellularLocation>
        <location evidence="1">Cytoplasm</location>
    </subcellularLocation>
</comment>
<comment type="similarity">
    <text evidence="1">Belongs to the class-I aminoacyl-tRNA synthetase family.</text>
</comment>
<reference key="1">
    <citation type="journal article" date="2006" name="BMC Genomics">
        <title>The genome of the square archaeon Haloquadratum walsbyi: life at the limits of water activity.</title>
        <authorList>
            <person name="Bolhuis H."/>
            <person name="Palm P."/>
            <person name="Wende A."/>
            <person name="Falb M."/>
            <person name="Rampp M."/>
            <person name="Rodriguez-Valera F."/>
            <person name="Pfeiffer F."/>
            <person name="Oesterhelt D."/>
        </authorList>
    </citation>
    <scope>NUCLEOTIDE SEQUENCE [LARGE SCALE GENOMIC DNA]</scope>
    <source>
        <strain>DSM 16790 / HBSQ001</strain>
    </source>
</reference>
<evidence type="ECO:0000255" key="1">
    <source>
        <dbReference type="HAMAP-Rule" id="MF_00123"/>
    </source>
</evidence>
<organism>
    <name type="scientific">Haloquadratum walsbyi (strain DSM 16790 / HBSQ001)</name>
    <dbReference type="NCBI Taxonomy" id="362976"/>
    <lineage>
        <taxon>Archaea</taxon>
        <taxon>Methanobacteriati</taxon>
        <taxon>Methanobacteriota</taxon>
        <taxon>Stenosarchaea group</taxon>
        <taxon>Halobacteria</taxon>
        <taxon>Halobacteriales</taxon>
        <taxon>Haloferacaceae</taxon>
        <taxon>Haloquadratum</taxon>
    </lineage>
</organism>
<protein>
    <recommendedName>
        <fullName evidence="1">Arginine--tRNA ligase</fullName>
        <ecNumber evidence="1">6.1.1.19</ecNumber>
    </recommendedName>
    <alternativeName>
        <fullName evidence="1">Arginyl-tRNA synthetase</fullName>
        <shortName evidence="1">ArgRS</shortName>
    </alternativeName>
</protein>
<proteinExistence type="inferred from homology"/>
<dbReference type="EC" id="6.1.1.19" evidence="1"/>
<dbReference type="EMBL" id="AM180088">
    <property type="protein sequence ID" value="CAJ53337.1"/>
    <property type="molecule type" value="Genomic_DNA"/>
</dbReference>
<dbReference type="RefSeq" id="WP_011572442.1">
    <property type="nucleotide sequence ID" value="NC_008212.1"/>
</dbReference>
<dbReference type="SMR" id="Q18FC1"/>
<dbReference type="STRING" id="362976.HQ_3239A"/>
<dbReference type="GeneID" id="4193716"/>
<dbReference type="KEGG" id="hwa:HQ_3239A"/>
<dbReference type="eggNOG" id="arCOG00487">
    <property type="taxonomic scope" value="Archaea"/>
</dbReference>
<dbReference type="HOGENOM" id="CLU_006406_6_1_2"/>
<dbReference type="Proteomes" id="UP000001975">
    <property type="component" value="Chromosome"/>
</dbReference>
<dbReference type="GO" id="GO:0005737">
    <property type="term" value="C:cytoplasm"/>
    <property type="evidence" value="ECO:0007669"/>
    <property type="project" value="UniProtKB-SubCell"/>
</dbReference>
<dbReference type="GO" id="GO:0004814">
    <property type="term" value="F:arginine-tRNA ligase activity"/>
    <property type="evidence" value="ECO:0007669"/>
    <property type="project" value="UniProtKB-UniRule"/>
</dbReference>
<dbReference type="GO" id="GO:0005524">
    <property type="term" value="F:ATP binding"/>
    <property type="evidence" value="ECO:0007669"/>
    <property type="project" value="UniProtKB-UniRule"/>
</dbReference>
<dbReference type="GO" id="GO:0006420">
    <property type="term" value="P:arginyl-tRNA aminoacylation"/>
    <property type="evidence" value="ECO:0007669"/>
    <property type="project" value="UniProtKB-UniRule"/>
</dbReference>
<dbReference type="CDD" id="cd07956">
    <property type="entry name" value="Anticodon_Ia_Arg"/>
    <property type="match status" value="1"/>
</dbReference>
<dbReference type="CDD" id="cd00671">
    <property type="entry name" value="ArgRS_core"/>
    <property type="match status" value="1"/>
</dbReference>
<dbReference type="FunFam" id="1.10.730.10:FF:000006">
    <property type="entry name" value="Arginyl-tRNA synthetase 2, mitochondrial"/>
    <property type="match status" value="1"/>
</dbReference>
<dbReference type="Gene3D" id="3.30.1360.70">
    <property type="entry name" value="Arginyl tRNA synthetase N-terminal domain"/>
    <property type="match status" value="1"/>
</dbReference>
<dbReference type="Gene3D" id="3.40.50.620">
    <property type="entry name" value="HUPs"/>
    <property type="match status" value="1"/>
</dbReference>
<dbReference type="Gene3D" id="1.10.730.10">
    <property type="entry name" value="Isoleucyl-tRNA Synthetase, Domain 1"/>
    <property type="match status" value="1"/>
</dbReference>
<dbReference type="HAMAP" id="MF_00123">
    <property type="entry name" value="Arg_tRNA_synth"/>
    <property type="match status" value="1"/>
</dbReference>
<dbReference type="InterPro" id="IPR001278">
    <property type="entry name" value="Arg-tRNA-ligase"/>
</dbReference>
<dbReference type="InterPro" id="IPR005148">
    <property type="entry name" value="Arg-tRNA-synth_N"/>
</dbReference>
<dbReference type="InterPro" id="IPR036695">
    <property type="entry name" value="Arg-tRNA-synth_N_sf"/>
</dbReference>
<dbReference type="InterPro" id="IPR035684">
    <property type="entry name" value="ArgRS_core"/>
</dbReference>
<dbReference type="InterPro" id="IPR008909">
    <property type="entry name" value="DALR_anticod-bd"/>
</dbReference>
<dbReference type="InterPro" id="IPR014729">
    <property type="entry name" value="Rossmann-like_a/b/a_fold"/>
</dbReference>
<dbReference type="InterPro" id="IPR009080">
    <property type="entry name" value="tRNAsynth_Ia_anticodon-bd"/>
</dbReference>
<dbReference type="NCBIfam" id="TIGR00456">
    <property type="entry name" value="argS"/>
    <property type="match status" value="1"/>
</dbReference>
<dbReference type="PANTHER" id="PTHR11956:SF5">
    <property type="entry name" value="ARGININE--TRNA LIGASE, CYTOPLASMIC"/>
    <property type="match status" value="1"/>
</dbReference>
<dbReference type="PANTHER" id="PTHR11956">
    <property type="entry name" value="ARGINYL-TRNA SYNTHETASE"/>
    <property type="match status" value="1"/>
</dbReference>
<dbReference type="Pfam" id="PF03485">
    <property type="entry name" value="Arg_tRNA_synt_N"/>
    <property type="match status" value="1"/>
</dbReference>
<dbReference type="Pfam" id="PF05746">
    <property type="entry name" value="DALR_1"/>
    <property type="match status" value="1"/>
</dbReference>
<dbReference type="Pfam" id="PF00750">
    <property type="entry name" value="tRNA-synt_1d"/>
    <property type="match status" value="1"/>
</dbReference>
<dbReference type="PRINTS" id="PR01038">
    <property type="entry name" value="TRNASYNTHARG"/>
</dbReference>
<dbReference type="SMART" id="SM01016">
    <property type="entry name" value="Arg_tRNA_synt_N"/>
    <property type="match status" value="1"/>
</dbReference>
<dbReference type="SMART" id="SM00836">
    <property type="entry name" value="DALR_1"/>
    <property type="match status" value="1"/>
</dbReference>
<dbReference type="SUPFAM" id="SSF47323">
    <property type="entry name" value="Anticodon-binding domain of a subclass of class I aminoacyl-tRNA synthetases"/>
    <property type="match status" value="1"/>
</dbReference>
<dbReference type="SUPFAM" id="SSF55190">
    <property type="entry name" value="Arginyl-tRNA synthetase (ArgRS), N-terminal 'additional' domain"/>
    <property type="match status" value="1"/>
</dbReference>
<dbReference type="SUPFAM" id="SSF52374">
    <property type="entry name" value="Nucleotidylyl transferase"/>
    <property type="match status" value="1"/>
</dbReference>
<accession>Q18FC1</accession>
<keyword id="KW-0030">Aminoacyl-tRNA synthetase</keyword>
<keyword id="KW-0067">ATP-binding</keyword>
<keyword id="KW-0963">Cytoplasm</keyword>
<keyword id="KW-0436">Ligase</keyword>
<keyword id="KW-0547">Nucleotide-binding</keyword>
<keyword id="KW-0648">Protein biosynthesis</keyword>
<keyword id="KW-1185">Reference proteome</keyword>
<feature type="chain" id="PRO_1000018039" description="Arginine--tRNA ligase">
    <location>
        <begin position="1"/>
        <end position="596"/>
    </location>
</feature>
<feature type="short sequence motif" description="'HIGH' region">
    <location>
        <begin position="127"/>
        <end position="137"/>
    </location>
</feature>
<sequence length="596" mass="66431">MFRPFRSEVEHAVESALQTLALPTDDLGVETPPEDVPATLASSVAFRLARSAKDSPPRVADDIAAAIDLEPDSQTYEYIDHVDTRGPYINFHVNDAYYMDTLTAAQDPGYGHLPNTGQSVVVEHTSANPTGPVHVGRGRNTIFGDAVARLLEYNGDTVDRHYYLNDAGRQVGVFTWAYEKFDADSLPDPERDRPDYDLVRYYRRGNEFLENADADAVESAEDEIASIINGLEAGNTETYERVQTVVDQVIDGMQHSFDRLSAIFDEFIKETRFIQNGDADAVVERLKSADCAVYEDDAWQIDLSAYDIEKNLVFLRSDGTTLYTTRDLAHHEWKFDNYDASVTILGEDHKLQAEQLDATLQILGNDTDQLRQPFYSWVNLPEGGMSTRKGTGVDLDDLLDEAIARAREEVHDRLGSRVRDDSLSSDDIDRIARQVGVGAVRYDIVSKQPTKGITFEWDRALDFEAQSAPYIQYVHARCCGIETEVNSNTDLDIDALTSDSIPDITMLRTDAERALLQEIARFPAVVESAAADLEPHVIATFARSFAEQFNTFYRECSVLNAESEIMTAARVSLVRAARHTVANALDIVGVEAPQSM</sequence>
<gene>
    <name evidence="1" type="primary">argS</name>
    <name type="ordered locus">HQ_3239A</name>
</gene>
<name>SYR_HALWD</name>